<sequence>MQLNSTEISELIKQRIAQFNVVSEAHNEGTIVSVSDGVIRIHGLADCMQGEMISLPGNRYAIALNLERDSVGAVVMGPYADLAEGMKVKCTGRILEVPVGRGLLGRVVNTLGAPIDGKGPLDHDGFSAVEAIAPGVIERQSVDQPVQTGYKAVDSMIPIGRGQRELIIGDRQTGKTALAIDAIINQRDSGIKCIYVAIGQKASTISNVVRKLEEHGALANTIVVVATASESAALQYLAPYAGCAMGEYFRDRGEDALIIYDDLSKQAVAYRQISLLLRRPPGREAFPGDVFYLHSRLLERAARVNAEYVEAFTKGEVKGKTGSLTALPIIETQAGDVSAFVPTNVISITDGQIFLETNLFNAGIRPAVNPGISVSRVGGAAQTKIMKKLSGGIRTALAQYRELAAFSQFASDLDDATRKQLDHGQKVTELLKQKQYAPMSVAQQSLVLFAAERGYLADVELSKIGSFEAALLAYVDRDHAPLMQEINQTGGYNDEIEGKLKGILDSFKATQSW</sequence>
<protein>
    <recommendedName>
        <fullName evidence="1">ATP synthase subunit alpha</fullName>
        <ecNumber evidence="1">7.1.2.2</ecNumber>
    </recommendedName>
    <alternativeName>
        <fullName evidence="1">ATP synthase F1 sector subunit alpha</fullName>
    </alternativeName>
    <alternativeName>
        <fullName evidence="1">F-ATPase subunit alpha</fullName>
    </alternativeName>
</protein>
<dbReference type="EC" id="7.1.2.2" evidence="1"/>
<dbReference type="EMBL" id="CP000036">
    <property type="protein sequence ID" value="ABB68224.1"/>
    <property type="molecule type" value="Genomic_DNA"/>
</dbReference>
<dbReference type="RefSeq" id="WP_001176745.1">
    <property type="nucleotide sequence ID" value="NC_007613.1"/>
</dbReference>
<dbReference type="SMR" id="Q31UN4"/>
<dbReference type="GeneID" id="93778233"/>
<dbReference type="KEGG" id="sbo:SBO_3753"/>
<dbReference type="HOGENOM" id="CLU_010091_2_1_6"/>
<dbReference type="Proteomes" id="UP000007067">
    <property type="component" value="Chromosome"/>
</dbReference>
<dbReference type="GO" id="GO:0005886">
    <property type="term" value="C:plasma membrane"/>
    <property type="evidence" value="ECO:0007669"/>
    <property type="project" value="UniProtKB-SubCell"/>
</dbReference>
<dbReference type="GO" id="GO:0045259">
    <property type="term" value="C:proton-transporting ATP synthase complex"/>
    <property type="evidence" value="ECO:0007669"/>
    <property type="project" value="UniProtKB-KW"/>
</dbReference>
<dbReference type="GO" id="GO:0043531">
    <property type="term" value="F:ADP binding"/>
    <property type="evidence" value="ECO:0007669"/>
    <property type="project" value="TreeGrafter"/>
</dbReference>
<dbReference type="GO" id="GO:0005524">
    <property type="term" value="F:ATP binding"/>
    <property type="evidence" value="ECO:0007669"/>
    <property type="project" value="UniProtKB-UniRule"/>
</dbReference>
<dbReference type="GO" id="GO:0046933">
    <property type="term" value="F:proton-transporting ATP synthase activity, rotational mechanism"/>
    <property type="evidence" value="ECO:0007669"/>
    <property type="project" value="UniProtKB-UniRule"/>
</dbReference>
<dbReference type="CDD" id="cd18113">
    <property type="entry name" value="ATP-synt_F1_alpha_C"/>
    <property type="match status" value="1"/>
</dbReference>
<dbReference type="CDD" id="cd18116">
    <property type="entry name" value="ATP-synt_F1_alpha_N"/>
    <property type="match status" value="1"/>
</dbReference>
<dbReference type="CDD" id="cd01132">
    <property type="entry name" value="F1-ATPase_alpha_CD"/>
    <property type="match status" value="1"/>
</dbReference>
<dbReference type="FunFam" id="1.20.150.20:FF:000001">
    <property type="entry name" value="ATP synthase subunit alpha"/>
    <property type="match status" value="1"/>
</dbReference>
<dbReference type="FunFam" id="2.40.30.20:FF:000001">
    <property type="entry name" value="ATP synthase subunit alpha"/>
    <property type="match status" value="1"/>
</dbReference>
<dbReference type="FunFam" id="3.40.50.300:FF:000002">
    <property type="entry name" value="ATP synthase subunit alpha"/>
    <property type="match status" value="1"/>
</dbReference>
<dbReference type="Gene3D" id="2.40.30.20">
    <property type="match status" value="1"/>
</dbReference>
<dbReference type="Gene3D" id="1.20.150.20">
    <property type="entry name" value="ATP synthase alpha/beta chain, C-terminal domain"/>
    <property type="match status" value="1"/>
</dbReference>
<dbReference type="Gene3D" id="3.40.50.300">
    <property type="entry name" value="P-loop containing nucleotide triphosphate hydrolases"/>
    <property type="match status" value="1"/>
</dbReference>
<dbReference type="HAMAP" id="MF_01346">
    <property type="entry name" value="ATP_synth_alpha_bact"/>
    <property type="match status" value="1"/>
</dbReference>
<dbReference type="InterPro" id="IPR023366">
    <property type="entry name" value="ATP_synth_asu-like_sf"/>
</dbReference>
<dbReference type="InterPro" id="IPR000793">
    <property type="entry name" value="ATP_synth_asu_C"/>
</dbReference>
<dbReference type="InterPro" id="IPR038376">
    <property type="entry name" value="ATP_synth_asu_C_sf"/>
</dbReference>
<dbReference type="InterPro" id="IPR033732">
    <property type="entry name" value="ATP_synth_F1_a_nt-bd_dom"/>
</dbReference>
<dbReference type="InterPro" id="IPR005294">
    <property type="entry name" value="ATP_synth_F1_asu"/>
</dbReference>
<dbReference type="InterPro" id="IPR020003">
    <property type="entry name" value="ATPase_a/bsu_AS"/>
</dbReference>
<dbReference type="InterPro" id="IPR004100">
    <property type="entry name" value="ATPase_F1/V1/A1_a/bsu_N"/>
</dbReference>
<dbReference type="InterPro" id="IPR036121">
    <property type="entry name" value="ATPase_F1/V1/A1_a/bsu_N_sf"/>
</dbReference>
<dbReference type="InterPro" id="IPR000194">
    <property type="entry name" value="ATPase_F1/V1/A1_a/bsu_nucl-bd"/>
</dbReference>
<dbReference type="InterPro" id="IPR027417">
    <property type="entry name" value="P-loop_NTPase"/>
</dbReference>
<dbReference type="NCBIfam" id="TIGR00962">
    <property type="entry name" value="atpA"/>
    <property type="match status" value="1"/>
</dbReference>
<dbReference type="NCBIfam" id="NF009884">
    <property type="entry name" value="PRK13343.1"/>
    <property type="match status" value="1"/>
</dbReference>
<dbReference type="PANTHER" id="PTHR48082">
    <property type="entry name" value="ATP SYNTHASE SUBUNIT ALPHA, MITOCHONDRIAL"/>
    <property type="match status" value="1"/>
</dbReference>
<dbReference type="PANTHER" id="PTHR48082:SF2">
    <property type="entry name" value="ATP SYNTHASE SUBUNIT ALPHA, MITOCHONDRIAL"/>
    <property type="match status" value="1"/>
</dbReference>
<dbReference type="Pfam" id="PF00006">
    <property type="entry name" value="ATP-synt_ab"/>
    <property type="match status" value="1"/>
</dbReference>
<dbReference type="Pfam" id="PF00306">
    <property type="entry name" value="ATP-synt_ab_C"/>
    <property type="match status" value="1"/>
</dbReference>
<dbReference type="Pfam" id="PF02874">
    <property type="entry name" value="ATP-synt_ab_N"/>
    <property type="match status" value="1"/>
</dbReference>
<dbReference type="SUPFAM" id="SSF47917">
    <property type="entry name" value="C-terminal domain of alpha and beta subunits of F1 ATP synthase"/>
    <property type="match status" value="1"/>
</dbReference>
<dbReference type="SUPFAM" id="SSF50615">
    <property type="entry name" value="N-terminal domain of alpha and beta subunits of F1 ATP synthase"/>
    <property type="match status" value="1"/>
</dbReference>
<dbReference type="SUPFAM" id="SSF52540">
    <property type="entry name" value="P-loop containing nucleoside triphosphate hydrolases"/>
    <property type="match status" value="1"/>
</dbReference>
<dbReference type="PROSITE" id="PS00152">
    <property type="entry name" value="ATPASE_ALPHA_BETA"/>
    <property type="match status" value="1"/>
</dbReference>
<feature type="chain" id="PRO_0000238352" description="ATP synthase subunit alpha">
    <location>
        <begin position="1"/>
        <end position="513"/>
    </location>
</feature>
<feature type="binding site" evidence="1">
    <location>
        <begin position="169"/>
        <end position="176"/>
    </location>
    <ligand>
        <name>ATP</name>
        <dbReference type="ChEBI" id="CHEBI:30616"/>
    </ligand>
</feature>
<feature type="site" description="Required for activity" evidence="1">
    <location>
        <position position="373"/>
    </location>
</feature>
<comment type="function">
    <text evidence="1">Produces ATP from ADP in the presence of a proton gradient across the membrane. The alpha chain is a regulatory subunit.</text>
</comment>
<comment type="catalytic activity">
    <reaction evidence="1">
        <text>ATP + H2O + 4 H(+)(in) = ADP + phosphate + 5 H(+)(out)</text>
        <dbReference type="Rhea" id="RHEA:57720"/>
        <dbReference type="ChEBI" id="CHEBI:15377"/>
        <dbReference type="ChEBI" id="CHEBI:15378"/>
        <dbReference type="ChEBI" id="CHEBI:30616"/>
        <dbReference type="ChEBI" id="CHEBI:43474"/>
        <dbReference type="ChEBI" id="CHEBI:456216"/>
        <dbReference type="EC" id="7.1.2.2"/>
    </reaction>
</comment>
<comment type="subunit">
    <text evidence="1">F-type ATPases have 2 components, CF(1) - the catalytic core - and CF(0) - the membrane proton channel. CF(1) has five subunits: alpha(3), beta(3), gamma(1), delta(1), epsilon(1). CF(0) has three main subunits: a(1), b(2) and c(9-12). The alpha and beta chains form an alternating ring which encloses part of the gamma chain. CF(1) is attached to CF(0) by a central stalk formed by the gamma and epsilon chains, while a peripheral stalk is formed by the delta and b chains.</text>
</comment>
<comment type="subcellular location">
    <subcellularLocation>
        <location evidence="1">Cell inner membrane</location>
        <topology evidence="1">Peripheral membrane protein</topology>
    </subcellularLocation>
</comment>
<comment type="similarity">
    <text evidence="1">Belongs to the ATPase alpha/beta chains family.</text>
</comment>
<reference key="1">
    <citation type="journal article" date="2005" name="Nucleic Acids Res.">
        <title>Genome dynamics and diversity of Shigella species, the etiologic agents of bacillary dysentery.</title>
        <authorList>
            <person name="Yang F."/>
            <person name="Yang J."/>
            <person name="Zhang X."/>
            <person name="Chen L."/>
            <person name="Jiang Y."/>
            <person name="Yan Y."/>
            <person name="Tang X."/>
            <person name="Wang J."/>
            <person name="Xiong Z."/>
            <person name="Dong J."/>
            <person name="Xue Y."/>
            <person name="Zhu Y."/>
            <person name="Xu X."/>
            <person name="Sun L."/>
            <person name="Chen S."/>
            <person name="Nie H."/>
            <person name="Peng J."/>
            <person name="Xu J."/>
            <person name="Wang Y."/>
            <person name="Yuan Z."/>
            <person name="Wen Y."/>
            <person name="Yao Z."/>
            <person name="Shen Y."/>
            <person name="Qiang B."/>
            <person name="Hou Y."/>
            <person name="Yu J."/>
            <person name="Jin Q."/>
        </authorList>
    </citation>
    <scope>NUCLEOTIDE SEQUENCE [LARGE SCALE GENOMIC DNA]</scope>
    <source>
        <strain>Sb227</strain>
    </source>
</reference>
<name>ATPA_SHIBS</name>
<proteinExistence type="inferred from homology"/>
<gene>
    <name evidence="1" type="primary">atpA</name>
    <name type="ordered locus">SBO_3753</name>
</gene>
<organism>
    <name type="scientific">Shigella boydii serotype 4 (strain Sb227)</name>
    <dbReference type="NCBI Taxonomy" id="300268"/>
    <lineage>
        <taxon>Bacteria</taxon>
        <taxon>Pseudomonadati</taxon>
        <taxon>Pseudomonadota</taxon>
        <taxon>Gammaproteobacteria</taxon>
        <taxon>Enterobacterales</taxon>
        <taxon>Enterobacteriaceae</taxon>
        <taxon>Shigella</taxon>
    </lineage>
</organism>
<evidence type="ECO:0000255" key="1">
    <source>
        <dbReference type="HAMAP-Rule" id="MF_01346"/>
    </source>
</evidence>
<accession>Q31UN4</accession>
<keyword id="KW-0066">ATP synthesis</keyword>
<keyword id="KW-0067">ATP-binding</keyword>
<keyword id="KW-0997">Cell inner membrane</keyword>
<keyword id="KW-1003">Cell membrane</keyword>
<keyword id="KW-0139">CF(1)</keyword>
<keyword id="KW-0375">Hydrogen ion transport</keyword>
<keyword id="KW-0406">Ion transport</keyword>
<keyword id="KW-0472">Membrane</keyword>
<keyword id="KW-0547">Nucleotide-binding</keyword>
<keyword id="KW-1278">Translocase</keyword>
<keyword id="KW-0813">Transport</keyword>